<accession>P12715</accession>
<protein>
    <recommendedName>
        <fullName>Actin, cytoplasmic</fullName>
        <ecNumber evidence="1">3.6.4.-</ecNumber>
    </recommendedName>
    <alternativeName>
        <fullName>Actin, macronuclear</fullName>
    </alternativeName>
</protein>
<evidence type="ECO:0000250" key="1">
    <source>
        <dbReference type="UniProtKB" id="P68137"/>
    </source>
</evidence>
<evidence type="ECO:0000305" key="2"/>
<proteinExistence type="inferred from homology"/>
<comment type="function">
    <text>Actins are highly conserved proteins that are involved in various types of cell motility and are ubiquitously expressed in all eukaryotic cells.</text>
</comment>
<comment type="catalytic activity">
    <reaction evidence="1">
        <text>ATP + H2O = ADP + phosphate + H(+)</text>
        <dbReference type="Rhea" id="RHEA:13065"/>
        <dbReference type="ChEBI" id="CHEBI:15377"/>
        <dbReference type="ChEBI" id="CHEBI:15378"/>
        <dbReference type="ChEBI" id="CHEBI:30616"/>
        <dbReference type="ChEBI" id="CHEBI:43474"/>
        <dbReference type="ChEBI" id="CHEBI:456216"/>
    </reaction>
</comment>
<comment type="subcellular location">
    <subcellularLocation>
        <location>Cytoplasm</location>
        <location>Cytoskeleton</location>
    </subcellularLocation>
</comment>
<comment type="similarity">
    <text evidence="2">Belongs to the actin family.</text>
</comment>
<dbReference type="EC" id="3.6.4.-" evidence="1"/>
<dbReference type="EMBL" id="M22480">
    <property type="protein sequence ID" value="AAA29393.1"/>
    <property type="molecule type" value="Genomic_DNA"/>
</dbReference>
<dbReference type="PIR" id="A31134">
    <property type="entry name" value="A31134"/>
</dbReference>
<dbReference type="SMR" id="P12715"/>
<dbReference type="GO" id="GO:0005737">
    <property type="term" value="C:cytoplasm"/>
    <property type="evidence" value="ECO:0007669"/>
    <property type="project" value="UniProtKB-KW"/>
</dbReference>
<dbReference type="GO" id="GO:0005856">
    <property type="term" value="C:cytoskeleton"/>
    <property type="evidence" value="ECO:0007669"/>
    <property type="project" value="UniProtKB-SubCell"/>
</dbReference>
<dbReference type="GO" id="GO:0005524">
    <property type="term" value="F:ATP binding"/>
    <property type="evidence" value="ECO:0007669"/>
    <property type="project" value="UniProtKB-KW"/>
</dbReference>
<dbReference type="GO" id="GO:0016787">
    <property type="term" value="F:hydrolase activity"/>
    <property type="evidence" value="ECO:0007669"/>
    <property type="project" value="UniProtKB-KW"/>
</dbReference>
<dbReference type="FunFam" id="3.30.420.40:FF:000291">
    <property type="entry name" value="Actin, alpha skeletal muscle"/>
    <property type="match status" value="1"/>
</dbReference>
<dbReference type="FunFam" id="3.90.640.10:FF:000047">
    <property type="entry name" value="Actin, alpha skeletal muscle"/>
    <property type="match status" value="1"/>
</dbReference>
<dbReference type="FunFam" id="3.30.420.40:FF:000058">
    <property type="entry name" value="Putative actin-related protein 5"/>
    <property type="match status" value="1"/>
</dbReference>
<dbReference type="Gene3D" id="3.30.420.40">
    <property type="match status" value="2"/>
</dbReference>
<dbReference type="Gene3D" id="3.90.640.10">
    <property type="entry name" value="Actin, Chain A, domain 4"/>
    <property type="match status" value="1"/>
</dbReference>
<dbReference type="InterPro" id="IPR004000">
    <property type="entry name" value="Actin"/>
</dbReference>
<dbReference type="InterPro" id="IPR020902">
    <property type="entry name" value="Actin/actin-like_CS"/>
</dbReference>
<dbReference type="InterPro" id="IPR004001">
    <property type="entry name" value="Actin_CS"/>
</dbReference>
<dbReference type="InterPro" id="IPR043129">
    <property type="entry name" value="ATPase_NBD"/>
</dbReference>
<dbReference type="PANTHER" id="PTHR11937">
    <property type="entry name" value="ACTIN"/>
    <property type="match status" value="1"/>
</dbReference>
<dbReference type="Pfam" id="PF00022">
    <property type="entry name" value="Actin"/>
    <property type="match status" value="1"/>
</dbReference>
<dbReference type="PRINTS" id="PR00190">
    <property type="entry name" value="ACTIN"/>
</dbReference>
<dbReference type="SMART" id="SM00268">
    <property type="entry name" value="ACTIN"/>
    <property type="match status" value="1"/>
</dbReference>
<dbReference type="SUPFAM" id="SSF53067">
    <property type="entry name" value="Actin-like ATPase domain"/>
    <property type="match status" value="2"/>
</dbReference>
<dbReference type="PROSITE" id="PS00406">
    <property type="entry name" value="ACTINS_1"/>
    <property type="match status" value="1"/>
</dbReference>
<dbReference type="PROSITE" id="PS00432">
    <property type="entry name" value="ACTINS_2"/>
    <property type="match status" value="1"/>
</dbReference>
<dbReference type="PROSITE" id="PS01132">
    <property type="entry name" value="ACTINS_ACT_LIKE"/>
    <property type="match status" value="1"/>
</dbReference>
<keyword id="KW-0067">ATP-binding</keyword>
<keyword id="KW-0963">Cytoplasm</keyword>
<keyword id="KW-0206">Cytoskeleton</keyword>
<keyword id="KW-0378">Hydrolase</keyword>
<keyword id="KW-0547">Nucleotide-binding</keyword>
<name>ACT1_STENO</name>
<sequence>MADKQTVVVDNGSGVVKAGFSGEDAPRAVFPSIIGRPKNVSALIGVDSASEYIGDEAQQKRGVLKIFYPIEHGIIKDWEDMEKIWNHTFYVELRVQPDEHPVLLTEAPLNPKTNREKMTQIMFETFNVPALYVAIQAVLSLYSAGRTTGIVCDAGDGVTHTVPIYEGFSIPHAVSRIQLAGRDLTTFMAKLLTEKGYVFTSSAEMEIVRDIKEKLCFVALDYEAAMKQSYESTTFEKNYELPDGRVITIGNARFRCPEYLFKPLEMNGKELDSIQSLTYNSIQECDVDVRRDLYQNITLSGGTTMYEGIGERLLKEIEARAPKSINVKVIASPDRRFAVWRGGSTLTSLSTFASMWITKEDYDENGASIVHRKCL</sequence>
<organism>
    <name type="scientific">Sterkiella nova</name>
    <name type="common">Ciliate</name>
    <name type="synonym">Oxytricha nova</name>
    <dbReference type="NCBI Taxonomy" id="200597"/>
    <lineage>
        <taxon>Eukaryota</taxon>
        <taxon>Sar</taxon>
        <taxon>Alveolata</taxon>
        <taxon>Ciliophora</taxon>
        <taxon>Intramacronucleata</taxon>
        <taxon>Spirotrichea</taxon>
        <taxon>Stichotrichia</taxon>
        <taxon>Sporadotrichida</taxon>
        <taxon>Oxytrichidae</taxon>
        <taxon>Stylonychinae</taxon>
        <taxon>Sterkiella</taxon>
    </lineage>
</organism>
<feature type="chain" id="PRO_0000088976" description="Actin, cytoplasmic">
    <location>
        <begin position="1"/>
        <end position="375"/>
    </location>
</feature>
<reference key="1">
    <citation type="journal article" date="1988" name="DNA">
        <title>An analysis of the macronuclear actin genes of Oxytricha.</title>
        <authorList>
            <person name="Greslin A.F."/>
            <person name="Loukin S.H."/>
            <person name="Oka Y."/>
            <person name="Prescott D.M."/>
        </authorList>
    </citation>
    <scope>NUCLEOTIDE SEQUENCE [GENOMIC DNA]</scope>
</reference>